<sequence>MIFIDACFRKETPYTPIWMMRQAGRYLSEYQESRKKAGSFLELCKNSDLATEVTLQPVEILGVDAAILFSDILVVPLEMGLNLEFIPKKGPHFLETITDLKSVESLKIEAYKQLNYVYDTISQTRQKLSKEKALIGFCGSPWTLATYMIEGEGSKSYAKSKKMLYSEPEVLKALLEKLSLELIEYLSLQIQAGVNAVMIFDSWASALEKEAYLKFSWDYLKKISKELKKRYAHIPVILFPKGIGAYLDSIDGEFDVFGVDWGTPLEVAKKILGDKYVLQGNLEPTRLYDKNALEEGVERILKVMGNQGHIFNLGHGMLPDLPRENAKYLVQLVHAKTRR</sequence>
<comment type="function">
    <text evidence="1">Catalyzes the decarboxylation of four acetate groups of uroporphyrinogen-III to yield coproporphyrinogen-III.</text>
</comment>
<comment type="catalytic activity">
    <reaction evidence="1">
        <text>uroporphyrinogen III + 4 H(+) = coproporphyrinogen III + 4 CO2</text>
        <dbReference type="Rhea" id="RHEA:19865"/>
        <dbReference type="ChEBI" id="CHEBI:15378"/>
        <dbReference type="ChEBI" id="CHEBI:16526"/>
        <dbReference type="ChEBI" id="CHEBI:57308"/>
        <dbReference type="ChEBI" id="CHEBI:57309"/>
        <dbReference type="EC" id="4.1.1.37"/>
    </reaction>
</comment>
<comment type="pathway">
    <text evidence="1">Porphyrin-containing compound metabolism; protoporphyrin-IX biosynthesis; coproporphyrinogen-III from 5-aminolevulinate: step 4/4.</text>
</comment>
<comment type="subunit">
    <text evidence="1">Homodimer.</text>
</comment>
<comment type="subcellular location">
    <subcellularLocation>
        <location evidence="1">Cytoplasm</location>
    </subcellularLocation>
</comment>
<comment type="similarity">
    <text evidence="1">Belongs to the uroporphyrinogen decarboxylase family.</text>
</comment>
<feature type="chain" id="PRO_1000099999" description="Uroporphyrinogen decarboxylase">
    <location>
        <begin position="1"/>
        <end position="339"/>
    </location>
</feature>
<feature type="binding site" evidence="1">
    <location>
        <begin position="21"/>
        <end position="25"/>
    </location>
    <ligand>
        <name>substrate</name>
    </ligand>
</feature>
<feature type="binding site" evidence="1">
    <location>
        <position position="71"/>
    </location>
    <ligand>
        <name>substrate</name>
    </ligand>
</feature>
<feature type="binding site" evidence="1">
    <location>
        <position position="147"/>
    </location>
    <ligand>
        <name>substrate</name>
    </ligand>
</feature>
<feature type="binding site" evidence="1">
    <location>
        <position position="202"/>
    </location>
    <ligand>
        <name>substrate</name>
    </ligand>
</feature>
<feature type="binding site" evidence="1">
    <location>
        <position position="315"/>
    </location>
    <ligand>
        <name>substrate</name>
    </ligand>
</feature>
<feature type="site" description="Transition state stabilizer" evidence="1">
    <location>
        <position position="71"/>
    </location>
</feature>
<keyword id="KW-0963">Cytoplasm</keyword>
<keyword id="KW-0210">Decarboxylase</keyword>
<keyword id="KW-0456">Lyase</keyword>
<keyword id="KW-0627">Porphyrin biosynthesis</keyword>
<protein>
    <recommendedName>
        <fullName evidence="1">Uroporphyrinogen decarboxylase</fullName>
        <shortName evidence="1">UPD</shortName>
        <shortName evidence="1">URO-D</shortName>
        <ecNumber evidence="1">4.1.1.37</ecNumber>
    </recommendedName>
</protein>
<evidence type="ECO:0000255" key="1">
    <source>
        <dbReference type="HAMAP-Rule" id="MF_00218"/>
    </source>
</evidence>
<gene>
    <name evidence="1" type="primary">hemE</name>
    <name type="ordered locus">HPSH_03840</name>
</gene>
<accession>B2UTM1</accession>
<name>DCUP_HELPS</name>
<organism>
    <name type="scientific">Helicobacter pylori (strain Shi470)</name>
    <dbReference type="NCBI Taxonomy" id="512562"/>
    <lineage>
        <taxon>Bacteria</taxon>
        <taxon>Pseudomonadati</taxon>
        <taxon>Campylobacterota</taxon>
        <taxon>Epsilonproteobacteria</taxon>
        <taxon>Campylobacterales</taxon>
        <taxon>Helicobacteraceae</taxon>
        <taxon>Helicobacter</taxon>
    </lineage>
</organism>
<proteinExistence type="inferred from homology"/>
<reference key="1">
    <citation type="submission" date="2008-05" db="EMBL/GenBank/DDBJ databases">
        <title>Genome sequence of Helicobacter pylori from the remote Amazon: traces of Asian ancestry of the first Americans.</title>
        <authorList>
            <person name="Kersulyte D."/>
            <person name="Kalia A."/>
            <person name="Gilman R.H."/>
            <person name="Berg D.E."/>
        </authorList>
    </citation>
    <scope>NUCLEOTIDE SEQUENCE [LARGE SCALE GENOMIC DNA]</scope>
    <source>
        <strain>Shi470</strain>
    </source>
</reference>
<dbReference type="EC" id="4.1.1.37" evidence="1"/>
<dbReference type="EMBL" id="CP001072">
    <property type="protein sequence ID" value="ACD48203.1"/>
    <property type="molecule type" value="Genomic_DNA"/>
</dbReference>
<dbReference type="RefSeq" id="WP_012443363.1">
    <property type="nucleotide sequence ID" value="NC_010698.2"/>
</dbReference>
<dbReference type="SMR" id="B2UTM1"/>
<dbReference type="KEGG" id="hps:HPSH_03840"/>
<dbReference type="HOGENOM" id="CLU_040933_0_0_7"/>
<dbReference type="UniPathway" id="UPA00251">
    <property type="reaction ID" value="UER00321"/>
</dbReference>
<dbReference type="GO" id="GO:0005829">
    <property type="term" value="C:cytosol"/>
    <property type="evidence" value="ECO:0007669"/>
    <property type="project" value="TreeGrafter"/>
</dbReference>
<dbReference type="GO" id="GO:0004853">
    <property type="term" value="F:uroporphyrinogen decarboxylase activity"/>
    <property type="evidence" value="ECO:0007669"/>
    <property type="project" value="UniProtKB-UniRule"/>
</dbReference>
<dbReference type="GO" id="GO:0019353">
    <property type="term" value="P:protoporphyrinogen IX biosynthetic process from glutamate"/>
    <property type="evidence" value="ECO:0007669"/>
    <property type="project" value="TreeGrafter"/>
</dbReference>
<dbReference type="CDD" id="cd00717">
    <property type="entry name" value="URO-D"/>
    <property type="match status" value="1"/>
</dbReference>
<dbReference type="FunFam" id="3.20.20.210:FF:000007">
    <property type="entry name" value="Uroporphyrinogen decarboxylase"/>
    <property type="match status" value="1"/>
</dbReference>
<dbReference type="Gene3D" id="3.20.20.210">
    <property type="match status" value="1"/>
</dbReference>
<dbReference type="HAMAP" id="MF_00218">
    <property type="entry name" value="URO_D"/>
    <property type="match status" value="1"/>
</dbReference>
<dbReference type="InterPro" id="IPR038071">
    <property type="entry name" value="UROD/MetE-like_sf"/>
</dbReference>
<dbReference type="InterPro" id="IPR006361">
    <property type="entry name" value="Uroporphyrinogen_deCO2ase_HemE"/>
</dbReference>
<dbReference type="InterPro" id="IPR000257">
    <property type="entry name" value="Uroporphyrinogen_deCOase"/>
</dbReference>
<dbReference type="NCBIfam" id="TIGR01464">
    <property type="entry name" value="hemE"/>
    <property type="match status" value="1"/>
</dbReference>
<dbReference type="PANTHER" id="PTHR21091">
    <property type="entry name" value="METHYLTETRAHYDROFOLATE:HOMOCYSTEINE METHYLTRANSFERASE RELATED"/>
    <property type="match status" value="1"/>
</dbReference>
<dbReference type="PANTHER" id="PTHR21091:SF169">
    <property type="entry name" value="UROPORPHYRINOGEN DECARBOXYLASE"/>
    <property type="match status" value="1"/>
</dbReference>
<dbReference type="Pfam" id="PF01208">
    <property type="entry name" value="URO-D"/>
    <property type="match status" value="1"/>
</dbReference>
<dbReference type="SUPFAM" id="SSF51726">
    <property type="entry name" value="UROD/MetE-like"/>
    <property type="match status" value="1"/>
</dbReference>
<dbReference type="PROSITE" id="PS00906">
    <property type="entry name" value="UROD_1"/>
    <property type="match status" value="1"/>
</dbReference>
<dbReference type="PROSITE" id="PS00907">
    <property type="entry name" value="UROD_2"/>
    <property type="match status" value="1"/>
</dbReference>